<organism>
    <name type="scientific">Arabidopsis thaliana</name>
    <name type="common">Mouse-ear cress</name>
    <dbReference type="NCBI Taxonomy" id="3702"/>
    <lineage>
        <taxon>Eukaryota</taxon>
        <taxon>Viridiplantae</taxon>
        <taxon>Streptophyta</taxon>
        <taxon>Embryophyta</taxon>
        <taxon>Tracheophyta</taxon>
        <taxon>Spermatophyta</taxon>
        <taxon>Magnoliopsida</taxon>
        <taxon>eudicotyledons</taxon>
        <taxon>Gunneridae</taxon>
        <taxon>Pentapetalae</taxon>
        <taxon>rosids</taxon>
        <taxon>malvids</taxon>
        <taxon>Brassicales</taxon>
        <taxon>Brassicaceae</taxon>
        <taxon>Camelineae</taxon>
        <taxon>Arabidopsis</taxon>
    </lineage>
</organism>
<reference key="1">
    <citation type="journal article" date="1999" name="Nature">
        <title>Sequence and analysis of chromosome 2 of the plant Arabidopsis thaliana.</title>
        <authorList>
            <person name="Lin X."/>
            <person name="Kaul S."/>
            <person name="Rounsley S.D."/>
            <person name="Shea T.P."/>
            <person name="Benito M.-I."/>
            <person name="Town C.D."/>
            <person name="Fujii C.Y."/>
            <person name="Mason T.M."/>
            <person name="Bowman C.L."/>
            <person name="Barnstead M.E."/>
            <person name="Feldblyum T.V."/>
            <person name="Buell C.R."/>
            <person name="Ketchum K.A."/>
            <person name="Lee J.J."/>
            <person name="Ronning C.M."/>
            <person name="Koo H.L."/>
            <person name="Moffat K.S."/>
            <person name="Cronin L.A."/>
            <person name="Shen M."/>
            <person name="Pai G."/>
            <person name="Van Aken S."/>
            <person name="Umayam L."/>
            <person name="Tallon L.J."/>
            <person name="Gill J.E."/>
            <person name="Adams M.D."/>
            <person name="Carrera A.J."/>
            <person name="Creasy T.H."/>
            <person name="Goodman H.M."/>
            <person name="Somerville C.R."/>
            <person name="Copenhaver G.P."/>
            <person name="Preuss D."/>
            <person name="Nierman W.C."/>
            <person name="White O."/>
            <person name="Eisen J.A."/>
            <person name="Salzberg S.L."/>
            <person name="Fraser C.M."/>
            <person name="Venter J.C."/>
        </authorList>
    </citation>
    <scope>NUCLEOTIDE SEQUENCE [LARGE SCALE GENOMIC DNA]</scope>
    <source>
        <strain>cv. Columbia</strain>
    </source>
</reference>
<reference key="2">
    <citation type="journal article" date="2017" name="Plant J.">
        <title>Araport11: a complete reannotation of the Arabidopsis thaliana reference genome.</title>
        <authorList>
            <person name="Cheng C.Y."/>
            <person name="Krishnakumar V."/>
            <person name="Chan A.P."/>
            <person name="Thibaud-Nissen F."/>
            <person name="Schobel S."/>
            <person name="Town C.D."/>
        </authorList>
    </citation>
    <scope>GENOME REANNOTATION</scope>
    <source>
        <strain>cv. Columbia</strain>
    </source>
</reference>
<reference key="3">
    <citation type="journal article" date="2003" name="Science">
        <title>Empirical analysis of transcriptional activity in the Arabidopsis genome.</title>
        <authorList>
            <person name="Yamada K."/>
            <person name="Lim J."/>
            <person name="Dale J.M."/>
            <person name="Chen H."/>
            <person name="Shinn P."/>
            <person name="Palm C.J."/>
            <person name="Southwick A.M."/>
            <person name="Wu H.C."/>
            <person name="Kim C.J."/>
            <person name="Nguyen M."/>
            <person name="Pham P.K."/>
            <person name="Cheuk R.F."/>
            <person name="Karlin-Newmann G."/>
            <person name="Liu S.X."/>
            <person name="Lam B."/>
            <person name="Sakano H."/>
            <person name="Wu T."/>
            <person name="Yu G."/>
            <person name="Miranda M."/>
            <person name="Quach H.L."/>
            <person name="Tripp M."/>
            <person name="Chang C.H."/>
            <person name="Lee J.M."/>
            <person name="Toriumi M.J."/>
            <person name="Chan M.M."/>
            <person name="Tang C.C."/>
            <person name="Onodera C.S."/>
            <person name="Deng J.M."/>
            <person name="Akiyama K."/>
            <person name="Ansari Y."/>
            <person name="Arakawa T."/>
            <person name="Banh J."/>
            <person name="Banno F."/>
            <person name="Bowser L."/>
            <person name="Brooks S.Y."/>
            <person name="Carninci P."/>
            <person name="Chao Q."/>
            <person name="Choy N."/>
            <person name="Enju A."/>
            <person name="Goldsmith A.D."/>
            <person name="Gurjal M."/>
            <person name="Hansen N.F."/>
            <person name="Hayashizaki Y."/>
            <person name="Johnson-Hopson C."/>
            <person name="Hsuan V.W."/>
            <person name="Iida K."/>
            <person name="Karnes M."/>
            <person name="Khan S."/>
            <person name="Koesema E."/>
            <person name="Ishida J."/>
            <person name="Jiang P.X."/>
            <person name="Jones T."/>
            <person name="Kawai J."/>
            <person name="Kamiya A."/>
            <person name="Meyers C."/>
            <person name="Nakajima M."/>
            <person name="Narusaka M."/>
            <person name="Seki M."/>
            <person name="Sakurai T."/>
            <person name="Satou M."/>
            <person name="Tamse R."/>
            <person name="Vaysberg M."/>
            <person name="Wallender E.K."/>
            <person name="Wong C."/>
            <person name="Yamamura Y."/>
            <person name="Yuan S."/>
            <person name="Shinozaki K."/>
            <person name="Davis R.W."/>
            <person name="Theologis A."/>
            <person name="Ecker J.R."/>
        </authorList>
    </citation>
    <scope>NUCLEOTIDE SEQUENCE [LARGE SCALE MRNA]</scope>
    <source>
        <strain>cv. Columbia</strain>
    </source>
</reference>
<reference key="4">
    <citation type="submission" date="2002-03" db="EMBL/GenBank/DDBJ databases">
        <title>Full-length cDNA from Arabidopsis thaliana.</title>
        <authorList>
            <person name="Brover V.V."/>
            <person name="Troukhan M.E."/>
            <person name="Alexandrov N.A."/>
            <person name="Lu Y.-P."/>
            <person name="Flavell R.B."/>
            <person name="Feldmann K.A."/>
        </authorList>
    </citation>
    <scope>NUCLEOTIDE SEQUENCE [LARGE SCALE MRNA] OF 266-571</scope>
</reference>
<accession>Q8LBH2</accession>
<accession>Q8S8K2</accession>
<accession>Q9ZVE6</accession>
<comment type="subcellular location">
    <subcellularLocation>
        <location evidence="1">Membrane</location>
        <location evidence="1">Clathrin-coated pit</location>
    </subcellularLocation>
    <subcellularLocation>
        <location evidence="1">Golgi apparatus</location>
    </subcellularLocation>
    <subcellularLocation>
        <location evidence="1">Cytoplasmic vesicle</location>
        <location evidence="1">Clathrin-coated vesicle</location>
    </subcellularLocation>
    <text evidence="1">Colocalized with clathrin in the Golgi area.</text>
</comment>
<feature type="chain" id="PRO_0000187074" description="Putative clathrin assembly protein At2g01600">
    <location>
        <begin position="1"/>
        <end position="571"/>
    </location>
</feature>
<feature type="domain" description="ENTH" evidence="2">
    <location>
        <begin position="24"/>
        <end position="161"/>
    </location>
</feature>
<feature type="region of interest" description="Disordered" evidence="3">
    <location>
        <begin position="325"/>
        <end position="346"/>
    </location>
</feature>
<feature type="region of interest" description="Disordered" evidence="3">
    <location>
        <begin position="474"/>
        <end position="571"/>
    </location>
</feature>
<feature type="compositionally biased region" description="Basic and acidic residues" evidence="3">
    <location>
        <begin position="337"/>
        <end position="346"/>
    </location>
</feature>
<feature type="compositionally biased region" description="Low complexity" evidence="3">
    <location>
        <begin position="508"/>
        <end position="522"/>
    </location>
</feature>
<feature type="compositionally biased region" description="Polar residues" evidence="3">
    <location>
        <begin position="523"/>
        <end position="532"/>
    </location>
</feature>
<feature type="compositionally biased region" description="Polar residues" evidence="3">
    <location>
        <begin position="543"/>
        <end position="571"/>
    </location>
</feature>
<feature type="sequence conflict" description="In Ref. 4; AAM67368." evidence="4" ref="4">
    <original>W</original>
    <variation>L</variation>
    <location>
        <position position="380"/>
    </location>
</feature>
<feature type="sequence conflict" description="In Ref. 4; AAM67368." evidence="4" ref="4">
    <original>A</original>
    <variation>T</variation>
    <location>
        <position position="465"/>
    </location>
</feature>
<evidence type="ECO:0000250" key="1"/>
<evidence type="ECO:0000255" key="2">
    <source>
        <dbReference type="PROSITE-ProRule" id="PRU00243"/>
    </source>
</evidence>
<evidence type="ECO:0000256" key="3">
    <source>
        <dbReference type="SAM" id="MobiDB-lite"/>
    </source>
</evidence>
<evidence type="ECO:0000305" key="4"/>
<gene>
    <name type="ordered locus">At2g01600</name>
    <name type="ORF">F2I9.22</name>
    <name type="ORF">T8O11.1</name>
</gene>
<protein>
    <recommendedName>
        <fullName>Putative clathrin assembly protein At2g01600</fullName>
    </recommendedName>
</protein>
<sequence>MGTLQSWRKAYGALKDSTKVGLVRVNSEYADLDVAIVKATNHVECPPKDRHLRKIFAATSVTRARADVAYCIHALSRRLHKTRNWTVALKTLIVIHRLLREGDPTFREELLNFSQRGRILQLSNFKDDSSPIAWDCSAWVRTYALFLEERLECFRVLKYDTEAERLPKSNPGQDKGYSRTRDLDGEELLEQLPALQQLLYRLIGCRPEGAANHNHVIQYALALVLKESFKVYCAINDGIINLIDKFFEMAKHEAITSLEIYKRAGQQARSLSDFYEACKGLELARNFQFPVLREPPQSFLTTMEEYIKEAPRVVDVPAEPLLLTYRPDDGLTTEDTEPSHEEREMLPSDDVVVVSEETEPSPPPPPSANAQNFIDTDDLWGLNTGAPDTSVIEDQNALALAIVSTDADPPTPHFGQPNNYDPTGWELALVTAPSSDISASTERKLAGGLDTLTLSSLYDDGAYIASQRPVYGAPAPNPFASHDPFASSNGTAPPPQQQAVNNPFGAYQQTYQHQPQPTYQHQSNPPTNNSNPFGDFGEFPVNPVSQQPNTSGYGDFSVNQHNNPFRSTGLI</sequence>
<keyword id="KW-0168">Coated pit</keyword>
<keyword id="KW-0968">Cytoplasmic vesicle</keyword>
<keyword id="KW-0254">Endocytosis</keyword>
<keyword id="KW-0333">Golgi apparatus</keyword>
<keyword id="KW-0472">Membrane</keyword>
<keyword id="KW-1185">Reference proteome</keyword>
<name>CAP8_ARATH</name>
<dbReference type="EMBL" id="AC005560">
    <property type="protein sequence ID" value="AAM15059.1"/>
    <property type="molecule type" value="Genomic_DNA"/>
</dbReference>
<dbReference type="EMBL" id="AC006069">
    <property type="protein sequence ID" value="AAD12692.3"/>
    <property type="molecule type" value="Genomic_DNA"/>
</dbReference>
<dbReference type="EMBL" id="CP002685">
    <property type="protein sequence ID" value="AEC05472.1"/>
    <property type="molecule type" value="Genomic_DNA"/>
</dbReference>
<dbReference type="EMBL" id="AF424593">
    <property type="protein sequence ID" value="AAL11587.1"/>
    <property type="molecule type" value="mRNA"/>
</dbReference>
<dbReference type="EMBL" id="AY096639">
    <property type="protein sequence ID" value="AAM20138.1"/>
    <property type="molecule type" value="mRNA"/>
</dbReference>
<dbReference type="EMBL" id="AY133828">
    <property type="protein sequence ID" value="AAM91762.1"/>
    <property type="molecule type" value="mRNA"/>
</dbReference>
<dbReference type="EMBL" id="AY087211">
    <property type="protein sequence ID" value="AAM67368.1"/>
    <property type="molecule type" value="mRNA"/>
</dbReference>
<dbReference type="PIR" id="G84426">
    <property type="entry name" value="G84426"/>
</dbReference>
<dbReference type="RefSeq" id="NP_565267.1">
    <property type="nucleotide sequence ID" value="NM_126221.4"/>
</dbReference>
<dbReference type="SMR" id="Q8LBH2"/>
<dbReference type="FunCoup" id="Q8LBH2">
    <property type="interactions" value="2580"/>
</dbReference>
<dbReference type="IntAct" id="Q8LBH2">
    <property type="interactions" value="1"/>
</dbReference>
<dbReference type="STRING" id="3702.Q8LBH2"/>
<dbReference type="iPTMnet" id="Q8LBH2"/>
<dbReference type="PaxDb" id="3702-AT2G01600.1"/>
<dbReference type="ProteomicsDB" id="240278"/>
<dbReference type="EnsemblPlants" id="AT2G01600.1">
    <property type="protein sequence ID" value="AT2G01600.1"/>
    <property type="gene ID" value="AT2G01600"/>
</dbReference>
<dbReference type="GeneID" id="814689"/>
<dbReference type="Gramene" id="AT2G01600.1">
    <property type="protein sequence ID" value="AT2G01600.1"/>
    <property type="gene ID" value="AT2G01600"/>
</dbReference>
<dbReference type="KEGG" id="ath:AT2G01600"/>
<dbReference type="Araport" id="AT2G01600"/>
<dbReference type="TAIR" id="AT2G01600">
    <property type="gene designation" value="PICALM1A"/>
</dbReference>
<dbReference type="eggNOG" id="KOG0251">
    <property type="taxonomic scope" value="Eukaryota"/>
</dbReference>
<dbReference type="HOGENOM" id="CLU_014098_2_0_1"/>
<dbReference type="InParanoid" id="Q8LBH2"/>
<dbReference type="OMA" id="MVPIKEP"/>
<dbReference type="PhylomeDB" id="Q8LBH2"/>
<dbReference type="PRO" id="PR:Q8LBH2"/>
<dbReference type="Proteomes" id="UP000006548">
    <property type="component" value="Chromosome 2"/>
</dbReference>
<dbReference type="ExpressionAtlas" id="Q8LBH2">
    <property type="expression patterns" value="baseline and differential"/>
</dbReference>
<dbReference type="GO" id="GO:0005905">
    <property type="term" value="C:clathrin-coated pit"/>
    <property type="evidence" value="ECO:0007669"/>
    <property type="project" value="UniProtKB-SubCell"/>
</dbReference>
<dbReference type="GO" id="GO:0030136">
    <property type="term" value="C:clathrin-coated vesicle"/>
    <property type="evidence" value="ECO:0007669"/>
    <property type="project" value="UniProtKB-SubCell"/>
</dbReference>
<dbReference type="GO" id="GO:0005794">
    <property type="term" value="C:Golgi apparatus"/>
    <property type="evidence" value="ECO:0007669"/>
    <property type="project" value="UniProtKB-SubCell"/>
</dbReference>
<dbReference type="GO" id="GO:0005739">
    <property type="term" value="C:mitochondrion"/>
    <property type="evidence" value="ECO:0007005"/>
    <property type="project" value="TAIR"/>
</dbReference>
<dbReference type="GO" id="GO:0005886">
    <property type="term" value="C:plasma membrane"/>
    <property type="evidence" value="ECO:0007005"/>
    <property type="project" value="TAIR"/>
</dbReference>
<dbReference type="GO" id="GO:0005545">
    <property type="term" value="F:1-phosphatidylinositol binding"/>
    <property type="evidence" value="ECO:0007669"/>
    <property type="project" value="InterPro"/>
</dbReference>
<dbReference type="GO" id="GO:0030276">
    <property type="term" value="F:clathrin binding"/>
    <property type="evidence" value="ECO:0000314"/>
    <property type="project" value="TAIR"/>
</dbReference>
<dbReference type="GO" id="GO:0000149">
    <property type="term" value="F:SNARE binding"/>
    <property type="evidence" value="ECO:0000353"/>
    <property type="project" value="TAIR"/>
</dbReference>
<dbReference type="GO" id="GO:0048268">
    <property type="term" value="P:clathrin coat assembly"/>
    <property type="evidence" value="ECO:0007669"/>
    <property type="project" value="InterPro"/>
</dbReference>
<dbReference type="GO" id="GO:0072583">
    <property type="term" value="P:clathrin-dependent endocytosis"/>
    <property type="evidence" value="ECO:0000314"/>
    <property type="project" value="TAIR"/>
</dbReference>
<dbReference type="CDD" id="cd03564">
    <property type="entry name" value="ANTH_N"/>
    <property type="match status" value="1"/>
</dbReference>
<dbReference type="FunFam" id="1.25.40.90:FF:000005">
    <property type="entry name" value="Clathrin assembly protein AP180"/>
    <property type="match status" value="1"/>
</dbReference>
<dbReference type="FunFam" id="1.20.58.150:FF:000003">
    <property type="entry name" value="Putative clathrin assembly protein"/>
    <property type="match status" value="1"/>
</dbReference>
<dbReference type="Gene3D" id="1.25.40.90">
    <property type="match status" value="1"/>
</dbReference>
<dbReference type="Gene3D" id="1.20.58.150">
    <property type="entry name" value="ANTH domain"/>
    <property type="match status" value="1"/>
</dbReference>
<dbReference type="InterPro" id="IPR011417">
    <property type="entry name" value="ANTH_dom"/>
</dbReference>
<dbReference type="InterPro" id="IPR014712">
    <property type="entry name" value="ANTH_dom_sf"/>
</dbReference>
<dbReference type="InterPro" id="IPR048050">
    <property type="entry name" value="ANTH_N_plant"/>
</dbReference>
<dbReference type="InterPro" id="IPR045192">
    <property type="entry name" value="AP180-like"/>
</dbReference>
<dbReference type="InterPro" id="IPR013809">
    <property type="entry name" value="ENTH"/>
</dbReference>
<dbReference type="InterPro" id="IPR008942">
    <property type="entry name" value="ENTH_VHS"/>
</dbReference>
<dbReference type="PANTHER" id="PTHR22951">
    <property type="entry name" value="CLATHRIN ASSEMBLY PROTEIN"/>
    <property type="match status" value="1"/>
</dbReference>
<dbReference type="PANTHER" id="PTHR22951:SF89">
    <property type="entry name" value="OS05G0549000 PROTEIN"/>
    <property type="match status" value="1"/>
</dbReference>
<dbReference type="Pfam" id="PF07651">
    <property type="entry name" value="ANTH"/>
    <property type="match status" value="1"/>
</dbReference>
<dbReference type="SMART" id="SM00273">
    <property type="entry name" value="ENTH"/>
    <property type="match status" value="1"/>
</dbReference>
<dbReference type="SUPFAM" id="SSF48464">
    <property type="entry name" value="ENTH/VHS domain"/>
    <property type="match status" value="1"/>
</dbReference>
<dbReference type="SUPFAM" id="SSF89009">
    <property type="entry name" value="GAT-like domain"/>
    <property type="match status" value="1"/>
</dbReference>
<dbReference type="PROSITE" id="PS50942">
    <property type="entry name" value="ENTH"/>
    <property type="match status" value="1"/>
</dbReference>
<proteinExistence type="evidence at transcript level"/>